<evidence type="ECO:0000255" key="1">
    <source>
        <dbReference type="HAMAP-Rule" id="MF_01601"/>
    </source>
</evidence>
<proteinExistence type="inferred from homology"/>
<comment type="function">
    <text evidence="1">Catalyzes the interconversion between ADP-D-glycero-beta-D-manno-heptose and ADP-L-glycero-beta-D-manno-heptose via an epimerization at carbon 6 of the heptose.</text>
</comment>
<comment type="catalytic activity">
    <reaction evidence="1">
        <text>ADP-D-glycero-beta-D-manno-heptose = ADP-L-glycero-beta-D-manno-heptose</text>
        <dbReference type="Rhea" id="RHEA:17577"/>
        <dbReference type="ChEBI" id="CHEBI:59967"/>
        <dbReference type="ChEBI" id="CHEBI:61506"/>
        <dbReference type="EC" id="5.1.3.20"/>
    </reaction>
</comment>
<comment type="cofactor">
    <cofactor evidence="1">
        <name>NADP(+)</name>
        <dbReference type="ChEBI" id="CHEBI:58349"/>
    </cofactor>
    <text evidence="1">Binds 1 NADP(+) per subunit.</text>
</comment>
<comment type="pathway">
    <text evidence="1">Nucleotide-sugar biosynthesis; ADP-L-glycero-beta-D-manno-heptose biosynthesis; ADP-L-glycero-beta-D-manno-heptose from D-glycero-beta-D-manno-heptose 7-phosphate: step 4/4.</text>
</comment>
<comment type="pathway">
    <text>Bacterial outer membrane biogenesis; LPS core biosynthesis.</text>
</comment>
<comment type="subunit">
    <text evidence="1">Homopentamer.</text>
</comment>
<comment type="domain">
    <text evidence="1">Contains a large N-terminal NADP-binding domain, and a smaller C-terminal substrate-binding domain.</text>
</comment>
<comment type="similarity">
    <text evidence="1">Belongs to the NAD(P)-dependent epimerase/dehydratase family. HldD subfamily.</text>
</comment>
<sequence>MIIVTGGAGMIGSNIVKALNEAGINDILVVDNLKNGKKFKNLVDLDITDYMDRDDFLTQIMAGDDFGPIEAIFHEGACSATTEWDGKYMMLNNYEYSKELLHYCLDREIPFLYASSAATYGETETFVEEREYEGALNVYGYSKQQFDNYVRRLWKDAEEHGEQLSQITGFRYFNVYGPREDHKGSMASVAFHLNNQINAGENPKLFEGSGHFKRDFVYVGDVCKVNLWFLENGVSGIFNCGTGRAESFEEVAKAVVKHHNKGEIQTIPFPDHLKGAYQEFTQADLTKLRAAGCDVEFKTVAEGVAEYLTIQNS</sequence>
<organism>
    <name type="scientific">Vibrio parahaemolyticus serotype O3:K6 (strain RIMD 2210633)</name>
    <dbReference type="NCBI Taxonomy" id="223926"/>
    <lineage>
        <taxon>Bacteria</taxon>
        <taxon>Pseudomonadati</taxon>
        <taxon>Pseudomonadota</taxon>
        <taxon>Gammaproteobacteria</taxon>
        <taxon>Vibrionales</taxon>
        <taxon>Vibrionaceae</taxon>
        <taxon>Vibrio</taxon>
    </lineage>
</organism>
<reference key="1">
    <citation type="journal article" date="2003" name="Lancet">
        <title>Genome sequence of Vibrio parahaemolyticus: a pathogenic mechanism distinct from that of V. cholerae.</title>
        <authorList>
            <person name="Makino K."/>
            <person name="Oshima K."/>
            <person name="Kurokawa K."/>
            <person name="Yokoyama K."/>
            <person name="Uda T."/>
            <person name="Tagomori K."/>
            <person name="Iijima Y."/>
            <person name="Najima M."/>
            <person name="Nakano M."/>
            <person name="Yamashita A."/>
            <person name="Kubota Y."/>
            <person name="Kimura S."/>
            <person name="Yasunaga T."/>
            <person name="Honda T."/>
            <person name="Shinagawa H."/>
            <person name="Hattori M."/>
            <person name="Iida T."/>
        </authorList>
    </citation>
    <scope>NUCLEOTIDE SEQUENCE [LARGE SCALE GENOMIC DNA]</scope>
    <source>
        <strain>RIMD 2210633</strain>
    </source>
</reference>
<protein>
    <recommendedName>
        <fullName evidence="1">ADP-L-glycero-D-manno-heptose-6-epimerase</fullName>
        <ecNumber evidence="1">5.1.3.20</ecNumber>
    </recommendedName>
    <alternativeName>
        <fullName evidence="1">ADP-L-glycero-beta-D-manno-heptose-6-epimerase</fullName>
        <shortName evidence="1">ADP-glyceromanno-heptose 6-epimerase</shortName>
        <shortName evidence="1">ADP-hep 6-epimerase</shortName>
        <shortName evidence="1">AGME</shortName>
    </alternativeName>
</protein>
<gene>
    <name evidence="1" type="primary">hldD</name>
    <name type="ordered locus">VP0214</name>
</gene>
<keyword id="KW-0119">Carbohydrate metabolism</keyword>
<keyword id="KW-0413">Isomerase</keyword>
<keyword id="KW-0521">NADP</keyword>
<name>HLDD_VIBPA</name>
<dbReference type="EC" id="5.1.3.20" evidence="1"/>
<dbReference type="EMBL" id="BA000031">
    <property type="protein sequence ID" value="BAC58477.1"/>
    <property type="molecule type" value="Genomic_DNA"/>
</dbReference>
<dbReference type="RefSeq" id="NP_796593.1">
    <property type="nucleotide sequence ID" value="NC_004603.1"/>
</dbReference>
<dbReference type="SMR" id="Q87T56"/>
<dbReference type="GeneID" id="1187681"/>
<dbReference type="KEGG" id="vpa:VP0214"/>
<dbReference type="PATRIC" id="fig|223926.6.peg.206"/>
<dbReference type="eggNOG" id="COG0451">
    <property type="taxonomic scope" value="Bacteria"/>
</dbReference>
<dbReference type="HOGENOM" id="CLU_007383_1_3_6"/>
<dbReference type="UniPathway" id="UPA00356">
    <property type="reaction ID" value="UER00440"/>
</dbReference>
<dbReference type="UniPathway" id="UPA00958"/>
<dbReference type="Proteomes" id="UP000002493">
    <property type="component" value="Chromosome 1"/>
</dbReference>
<dbReference type="GO" id="GO:0008712">
    <property type="term" value="F:ADP-glyceromanno-heptose 6-epimerase activity"/>
    <property type="evidence" value="ECO:0007669"/>
    <property type="project" value="UniProtKB-UniRule"/>
</dbReference>
<dbReference type="GO" id="GO:0050661">
    <property type="term" value="F:NADP binding"/>
    <property type="evidence" value="ECO:0007669"/>
    <property type="project" value="InterPro"/>
</dbReference>
<dbReference type="GO" id="GO:0097171">
    <property type="term" value="P:ADP-L-glycero-beta-D-manno-heptose biosynthetic process"/>
    <property type="evidence" value="ECO:0007669"/>
    <property type="project" value="UniProtKB-UniPathway"/>
</dbReference>
<dbReference type="GO" id="GO:0009244">
    <property type="term" value="P:lipopolysaccharide core region biosynthetic process"/>
    <property type="evidence" value="ECO:0007669"/>
    <property type="project" value="UniProtKB-UniPathway"/>
</dbReference>
<dbReference type="CDD" id="cd05248">
    <property type="entry name" value="ADP_GME_SDR_e"/>
    <property type="match status" value="1"/>
</dbReference>
<dbReference type="Gene3D" id="3.40.50.720">
    <property type="entry name" value="NAD(P)-binding Rossmann-like Domain"/>
    <property type="match status" value="1"/>
</dbReference>
<dbReference type="Gene3D" id="3.90.25.10">
    <property type="entry name" value="UDP-galactose 4-epimerase, domain 1"/>
    <property type="match status" value="1"/>
</dbReference>
<dbReference type="HAMAP" id="MF_01601">
    <property type="entry name" value="Heptose_epimerase"/>
    <property type="match status" value="1"/>
</dbReference>
<dbReference type="InterPro" id="IPR001509">
    <property type="entry name" value="Epimerase_deHydtase"/>
</dbReference>
<dbReference type="InterPro" id="IPR011912">
    <property type="entry name" value="Heptose_epim"/>
</dbReference>
<dbReference type="InterPro" id="IPR036291">
    <property type="entry name" value="NAD(P)-bd_dom_sf"/>
</dbReference>
<dbReference type="NCBIfam" id="TIGR02197">
    <property type="entry name" value="heptose_epim"/>
    <property type="match status" value="1"/>
</dbReference>
<dbReference type="NCBIfam" id="NF008360">
    <property type="entry name" value="PRK11150.1"/>
    <property type="match status" value="1"/>
</dbReference>
<dbReference type="PANTHER" id="PTHR43103:SF3">
    <property type="entry name" value="ADP-L-GLYCERO-D-MANNO-HEPTOSE-6-EPIMERASE"/>
    <property type="match status" value="1"/>
</dbReference>
<dbReference type="PANTHER" id="PTHR43103">
    <property type="entry name" value="NUCLEOSIDE-DIPHOSPHATE-SUGAR EPIMERASE"/>
    <property type="match status" value="1"/>
</dbReference>
<dbReference type="Pfam" id="PF01370">
    <property type="entry name" value="Epimerase"/>
    <property type="match status" value="1"/>
</dbReference>
<dbReference type="SUPFAM" id="SSF51735">
    <property type="entry name" value="NAD(P)-binding Rossmann-fold domains"/>
    <property type="match status" value="1"/>
</dbReference>
<accession>Q87T56</accession>
<feature type="chain" id="PRO_0000205812" description="ADP-L-glycero-D-manno-heptose-6-epimerase">
    <location>
        <begin position="1"/>
        <end position="313"/>
    </location>
</feature>
<feature type="active site" description="Proton acceptor" evidence="1">
    <location>
        <position position="139"/>
    </location>
</feature>
<feature type="active site" description="Proton acceptor" evidence="1">
    <location>
        <position position="183"/>
    </location>
</feature>
<feature type="binding site" evidence="1">
    <location>
        <begin position="10"/>
        <end position="11"/>
    </location>
    <ligand>
        <name>NADP(+)</name>
        <dbReference type="ChEBI" id="CHEBI:58349"/>
    </ligand>
</feature>
<feature type="binding site" evidence="1">
    <location>
        <begin position="31"/>
        <end position="32"/>
    </location>
    <ligand>
        <name>NADP(+)</name>
        <dbReference type="ChEBI" id="CHEBI:58349"/>
    </ligand>
</feature>
<feature type="binding site" evidence="1">
    <location>
        <position position="38"/>
    </location>
    <ligand>
        <name>NADP(+)</name>
        <dbReference type="ChEBI" id="CHEBI:58349"/>
    </ligand>
</feature>
<feature type="binding site" evidence="1">
    <location>
        <position position="53"/>
    </location>
    <ligand>
        <name>NADP(+)</name>
        <dbReference type="ChEBI" id="CHEBI:58349"/>
    </ligand>
</feature>
<feature type="binding site" evidence="1">
    <location>
        <begin position="75"/>
        <end position="79"/>
    </location>
    <ligand>
        <name>NADP(+)</name>
        <dbReference type="ChEBI" id="CHEBI:58349"/>
    </ligand>
</feature>
<feature type="binding site" evidence="1">
    <location>
        <position position="92"/>
    </location>
    <ligand>
        <name>NADP(+)</name>
        <dbReference type="ChEBI" id="CHEBI:58349"/>
    </ligand>
</feature>
<feature type="binding site" evidence="1">
    <location>
        <position position="143"/>
    </location>
    <ligand>
        <name>NADP(+)</name>
        <dbReference type="ChEBI" id="CHEBI:58349"/>
    </ligand>
</feature>
<feature type="binding site" evidence="1">
    <location>
        <position position="174"/>
    </location>
    <ligand>
        <name>substrate</name>
    </ligand>
</feature>
<feature type="binding site" evidence="1">
    <location>
        <position position="175"/>
    </location>
    <ligand>
        <name>NADP(+)</name>
        <dbReference type="ChEBI" id="CHEBI:58349"/>
    </ligand>
</feature>
<feature type="binding site" evidence="1">
    <location>
        <position position="183"/>
    </location>
    <ligand>
        <name>NADP(+)</name>
        <dbReference type="ChEBI" id="CHEBI:58349"/>
    </ligand>
</feature>
<feature type="binding site" evidence="1">
    <location>
        <position position="185"/>
    </location>
    <ligand>
        <name>substrate</name>
    </ligand>
</feature>
<feature type="binding site" evidence="1">
    <location>
        <position position="192"/>
    </location>
    <ligand>
        <name>substrate</name>
    </ligand>
</feature>
<feature type="binding site" evidence="1">
    <location>
        <begin position="206"/>
        <end position="209"/>
    </location>
    <ligand>
        <name>substrate</name>
    </ligand>
</feature>
<feature type="binding site" evidence="1">
    <location>
        <position position="214"/>
    </location>
    <ligand>
        <name>substrate</name>
    </ligand>
</feature>
<feature type="binding site" evidence="1">
    <location>
        <position position="277"/>
    </location>
    <ligand>
        <name>substrate</name>
    </ligand>
</feature>